<name>ANX10_HUMAN</name>
<organism>
    <name type="scientific">Homo sapiens</name>
    <name type="common">Human</name>
    <dbReference type="NCBI Taxonomy" id="9606"/>
    <lineage>
        <taxon>Eukaryota</taxon>
        <taxon>Metazoa</taxon>
        <taxon>Chordata</taxon>
        <taxon>Craniata</taxon>
        <taxon>Vertebrata</taxon>
        <taxon>Euteleostomi</taxon>
        <taxon>Mammalia</taxon>
        <taxon>Eutheria</taxon>
        <taxon>Euarchontoglires</taxon>
        <taxon>Primates</taxon>
        <taxon>Haplorrhini</taxon>
        <taxon>Catarrhini</taxon>
        <taxon>Hominidae</taxon>
        <taxon>Homo</taxon>
    </lineage>
</organism>
<evidence type="ECO:0000255" key="1">
    <source>
        <dbReference type="PROSITE-ProRule" id="PRU01245"/>
    </source>
</evidence>
<evidence type="ECO:0000269" key="2">
    <source>
    </source>
</evidence>
<evidence type="ECO:0000305" key="3"/>
<proteinExistence type="evidence at protein level"/>
<reference key="1">
    <citation type="journal article" date="1999" name="Genomics">
        <title>Novel human and mouse annexin A10 are linked to the genome duplications during early chordate evolution.</title>
        <authorList>
            <person name="Morgan R.O."/>
            <person name="Jenkins N.A."/>
            <person name="Gilbert D.J."/>
            <person name="Copeland N.G."/>
            <person name="Balsara B.R."/>
            <person name="Testa J.R."/>
            <person name="Fernandez M.-P."/>
        </authorList>
    </citation>
    <scope>NUCLEOTIDE SEQUENCE [MRNA]</scope>
    <scope>VARIANT LEU-71</scope>
    <source>
        <tissue>Lung</tissue>
    </source>
</reference>
<reference key="2">
    <citation type="submission" date="1999-10" db="EMBL/GenBank/DDBJ databases">
        <title>Annexin 14 highly expressed in metastatic pancreatic cancer cell line.</title>
        <authorList>
            <person name="Paul H."/>
            <person name="Gress T.M."/>
        </authorList>
    </citation>
    <scope>NUCLEOTIDE SEQUENCE [MRNA]</scope>
</reference>
<reference key="3">
    <citation type="journal article" date="2004" name="Genome Res.">
        <title>The status, quality, and expansion of the NIH full-length cDNA project: the Mammalian Gene Collection (MGC).</title>
        <authorList>
            <consortium name="The MGC Project Team"/>
        </authorList>
    </citation>
    <scope>NUCLEOTIDE SEQUENCE [LARGE SCALE MRNA]</scope>
    <source>
        <tissue>Colon</tissue>
    </source>
</reference>
<gene>
    <name type="primary">ANXA10</name>
    <name type="synonym">ANX14</name>
</gene>
<protein>
    <recommendedName>
        <fullName>Annexin A10</fullName>
    </recommendedName>
    <alternativeName>
        <fullName>Annexin-10</fullName>
    </alternativeName>
    <alternativeName>
        <fullName>Annexin-14</fullName>
    </alternativeName>
</protein>
<feature type="chain" id="PRO_0000067507" description="Annexin A10">
    <location>
        <begin position="1"/>
        <end position="324"/>
    </location>
</feature>
<feature type="repeat" description="Annexin 1" evidence="1">
    <location>
        <begin position="17"/>
        <end position="88"/>
    </location>
</feature>
<feature type="repeat" description="Annexin 2" evidence="1">
    <location>
        <begin position="89"/>
        <end position="160"/>
    </location>
</feature>
<feature type="repeat" description="Annexin 3" evidence="1">
    <location>
        <begin position="171"/>
        <end position="243"/>
    </location>
</feature>
<feature type="repeat" description="Annexin 4" evidence="1">
    <location>
        <begin position="247"/>
        <end position="318"/>
    </location>
</feature>
<feature type="sequence variant" id="VAR_030786" description="In dbSNP:rs6836994." evidence="2">
    <original>M</original>
    <variation>L</variation>
    <location>
        <position position="71"/>
    </location>
</feature>
<feature type="sequence conflict" description="In Ref. 2." evidence="3" ref="2">
    <original>REQLSDHFKDVMAG</original>
    <variation>KGAAFGSLPRCDGW</variation>
    <location>
        <begin position="72"/>
        <end position="85"/>
    </location>
</feature>
<feature type="sequence conflict" description="In Ref. 1; CAB51917." evidence="3" ref="1">
    <original>T</original>
    <variation>S</variation>
    <location>
        <position position="168"/>
    </location>
</feature>
<feature type="sequence conflict" description="In Ref. 1; CAB51917." evidence="3" ref="1">
    <original>E</original>
    <variation>G</variation>
    <location>
        <position position="190"/>
    </location>
</feature>
<sequence>MFCGDYVQGTIFPAPNFNPIMDAQMLGGALQGFDCDKDMLINILTQRCNAQRMMIAEAYQSMYGRDLIGDMREQLSDHFKDVMAGLMYPPPLYDAHELWHAMKGVGTDENCLIEILASRTNGEIFQMREAYCLQYSNNLQEDIYSETSGHFRDTLMNLVQGTREEGYTDPAMAAQDAMVLWEACQQKTGEHKTMLQMILCNKSYQQLRLVFQEFQNISGQDMVDAINECYDGYFQELLVAIVLCVRDKPAYFAYRLYSAIHDFGFHNKTVIRILIARSEIDLLTIRKRYKERYGKSLFHDIRNFASGHYKKALLAICAGDAEDY</sequence>
<accession>Q9UJ72</accession>
<accession>Q96IQ5</accession>
<accession>Q9UJV4</accession>
<comment type="interaction">
    <interactant intactId="EBI-8648654">
        <id>Q9UJ72</id>
    </interactant>
    <interactant intactId="EBI-2837485">
        <id>P30043</id>
        <label>BLVRB</label>
    </interactant>
    <organismsDiffer>false</organismsDiffer>
    <experiments>5</experiments>
</comment>
<comment type="interaction">
    <interactant intactId="EBI-8648654">
        <id>Q9UJ72</id>
    </interactant>
    <interactant intactId="EBI-997311">
        <id>Q96F86</id>
        <label>EDC3</label>
    </interactant>
    <organismsDiffer>false</organismsDiffer>
    <experiments>11</experiments>
</comment>
<comment type="similarity">
    <text evidence="1 3">Belongs to the annexin family.</text>
</comment>
<keyword id="KW-0041">Annexin</keyword>
<keyword id="KW-1267">Proteomics identification</keyword>
<keyword id="KW-1185">Reference proteome</keyword>
<keyword id="KW-0677">Repeat</keyword>
<dbReference type="EMBL" id="AJ238979">
    <property type="protein sequence ID" value="CAB51917.1"/>
    <property type="molecule type" value="mRNA"/>
</dbReference>
<dbReference type="EMBL" id="AF196478">
    <property type="protein sequence ID" value="AAF06672.1"/>
    <property type="molecule type" value="mRNA"/>
</dbReference>
<dbReference type="EMBL" id="BC007320">
    <property type="protein sequence ID" value="AAH07320.1"/>
    <property type="molecule type" value="mRNA"/>
</dbReference>
<dbReference type="CCDS" id="CCDS34096.1"/>
<dbReference type="RefSeq" id="NP_009124.2">
    <property type="nucleotide sequence ID" value="NM_007193.4"/>
</dbReference>
<dbReference type="SMR" id="Q9UJ72"/>
<dbReference type="BioGRID" id="116368">
    <property type="interactions" value="12"/>
</dbReference>
<dbReference type="FunCoup" id="Q9UJ72">
    <property type="interactions" value="18"/>
</dbReference>
<dbReference type="IntAct" id="Q9UJ72">
    <property type="interactions" value="2"/>
</dbReference>
<dbReference type="MINT" id="Q9UJ72"/>
<dbReference type="STRING" id="9606.ENSP00000352248"/>
<dbReference type="iPTMnet" id="Q9UJ72"/>
<dbReference type="PhosphoSitePlus" id="Q9UJ72"/>
<dbReference type="BioMuta" id="ANXA10"/>
<dbReference type="DMDM" id="126302518"/>
<dbReference type="jPOST" id="Q9UJ72"/>
<dbReference type="MassIVE" id="Q9UJ72"/>
<dbReference type="PaxDb" id="9606-ENSP00000352248"/>
<dbReference type="PeptideAtlas" id="Q9UJ72"/>
<dbReference type="ProteomicsDB" id="84595"/>
<dbReference type="Antibodypedia" id="1612">
    <property type="antibodies" value="470 antibodies from 37 providers"/>
</dbReference>
<dbReference type="DNASU" id="11199"/>
<dbReference type="Ensembl" id="ENST00000359299.8">
    <property type="protein sequence ID" value="ENSP00000352248.3"/>
    <property type="gene ID" value="ENSG00000109511.12"/>
</dbReference>
<dbReference type="GeneID" id="11199"/>
<dbReference type="KEGG" id="hsa:11199"/>
<dbReference type="MANE-Select" id="ENST00000359299.8">
    <property type="protein sequence ID" value="ENSP00000352248.3"/>
    <property type="RefSeq nucleotide sequence ID" value="NM_007193.5"/>
    <property type="RefSeq protein sequence ID" value="NP_009124.2"/>
</dbReference>
<dbReference type="UCSC" id="uc003irm.4">
    <property type="organism name" value="human"/>
</dbReference>
<dbReference type="AGR" id="HGNC:534"/>
<dbReference type="CTD" id="11199"/>
<dbReference type="DisGeNET" id="11199"/>
<dbReference type="GeneCards" id="ANXA10"/>
<dbReference type="HGNC" id="HGNC:534">
    <property type="gene designation" value="ANXA10"/>
</dbReference>
<dbReference type="HPA" id="ENSG00000109511">
    <property type="expression patterns" value="Tissue enriched (stomach)"/>
</dbReference>
<dbReference type="MIM" id="608008">
    <property type="type" value="gene"/>
</dbReference>
<dbReference type="neXtProt" id="NX_Q9UJ72"/>
<dbReference type="OpenTargets" id="ENSG00000109511"/>
<dbReference type="PharmGKB" id="PA24824"/>
<dbReference type="VEuPathDB" id="HostDB:ENSG00000109511"/>
<dbReference type="eggNOG" id="KOG0819">
    <property type="taxonomic scope" value="Eukaryota"/>
</dbReference>
<dbReference type="GeneTree" id="ENSGT00940000160623"/>
<dbReference type="HOGENOM" id="CLU_025300_0_0_1"/>
<dbReference type="InParanoid" id="Q9UJ72"/>
<dbReference type="OMA" id="KEIHDSW"/>
<dbReference type="OrthoDB" id="37886at2759"/>
<dbReference type="PAN-GO" id="Q9UJ72">
    <property type="GO annotations" value="2 GO annotations based on evolutionary models"/>
</dbReference>
<dbReference type="PhylomeDB" id="Q9UJ72"/>
<dbReference type="TreeFam" id="TF105452"/>
<dbReference type="PathwayCommons" id="Q9UJ72"/>
<dbReference type="SignaLink" id="Q9UJ72"/>
<dbReference type="BioGRID-ORCS" id="11199">
    <property type="hits" value="14 hits in 1151 CRISPR screens"/>
</dbReference>
<dbReference type="CD-CODE" id="804901D1">
    <property type="entry name" value="Nuclear speckle"/>
</dbReference>
<dbReference type="ChiTaRS" id="ANXA10">
    <property type="organism name" value="human"/>
</dbReference>
<dbReference type="GenomeRNAi" id="11199"/>
<dbReference type="Pharos" id="Q9UJ72">
    <property type="development level" value="Tbio"/>
</dbReference>
<dbReference type="PRO" id="PR:Q9UJ72"/>
<dbReference type="Proteomes" id="UP000005640">
    <property type="component" value="Chromosome 4"/>
</dbReference>
<dbReference type="RNAct" id="Q9UJ72">
    <property type="molecule type" value="protein"/>
</dbReference>
<dbReference type="Bgee" id="ENSG00000109511">
    <property type="expression patterns" value="Expressed in pylorus and 102 other cell types or tissues"/>
</dbReference>
<dbReference type="GO" id="GO:0005737">
    <property type="term" value="C:cytoplasm"/>
    <property type="evidence" value="ECO:0000318"/>
    <property type="project" value="GO_Central"/>
</dbReference>
<dbReference type="GO" id="GO:0005634">
    <property type="term" value="C:nucleus"/>
    <property type="evidence" value="ECO:0000318"/>
    <property type="project" value="GO_Central"/>
</dbReference>
<dbReference type="GO" id="GO:0005886">
    <property type="term" value="C:plasma membrane"/>
    <property type="evidence" value="ECO:0000318"/>
    <property type="project" value="GO_Central"/>
</dbReference>
<dbReference type="GO" id="GO:0012506">
    <property type="term" value="C:vesicle membrane"/>
    <property type="evidence" value="ECO:0000318"/>
    <property type="project" value="GO_Central"/>
</dbReference>
<dbReference type="GO" id="GO:0005509">
    <property type="term" value="F:calcium ion binding"/>
    <property type="evidence" value="ECO:0000304"/>
    <property type="project" value="ProtInc"/>
</dbReference>
<dbReference type="GO" id="GO:0005544">
    <property type="term" value="F:calcium-dependent phospholipid binding"/>
    <property type="evidence" value="ECO:0000318"/>
    <property type="project" value="GO_Central"/>
</dbReference>
<dbReference type="GO" id="GO:0001786">
    <property type="term" value="F:phosphatidylserine binding"/>
    <property type="evidence" value="ECO:0000318"/>
    <property type="project" value="GO_Central"/>
</dbReference>
<dbReference type="FunFam" id="1.10.220.10:FF:000001">
    <property type="entry name" value="Annexin"/>
    <property type="match status" value="1"/>
</dbReference>
<dbReference type="FunFam" id="1.10.220.10:FF:000003">
    <property type="entry name" value="Annexin"/>
    <property type="match status" value="1"/>
</dbReference>
<dbReference type="FunFam" id="1.10.220.10:FF:000012">
    <property type="entry name" value="Annexin A10"/>
    <property type="match status" value="1"/>
</dbReference>
<dbReference type="FunFam" id="1.10.220.10:FF:000020">
    <property type="entry name" value="Annexin A10"/>
    <property type="match status" value="1"/>
</dbReference>
<dbReference type="Gene3D" id="1.10.220.10">
    <property type="entry name" value="Annexin"/>
    <property type="match status" value="4"/>
</dbReference>
<dbReference type="InterPro" id="IPR001464">
    <property type="entry name" value="Annexin"/>
</dbReference>
<dbReference type="InterPro" id="IPR018502">
    <property type="entry name" value="Annexin_repeat"/>
</dbReference>
<dbReference type="InterPro" id="IPR018252">
    <property type="entry name" value="Annexin_repeat_CS"/>
</dbReference>
<dbReference type="InterPro" id="IPR037104">
    <property type="entry name" value="Annexin_sf"/>
</dbReference>
<dbReference type="InterPro" id="IPR008156">
    <property type="entry name" value="ANX10"/>
</dbReference>
<dbReference type="PANTHER" id="PTHR10502">
    <property type="entry name" value="ANNEXIN"/>
    <property type="match status" value="1"/>
</dbReference>
<dbReference type="PANTHER" id="PTHR10502:SF100">
    <property type="entry name" value="ANNEXIN A10"/>
    <property type="match status" value="1"/>
</dbReference>
<dbReference type="Pfam" id="PF00191">
    <property type="entry name" value="Annexin"/>
    <property type="match status" value="4"/>
</dbReference>
<dbReference type="PRINTS" id="PR00196">
    <property type="entry name" value="ANNEXIN"/>
</dbReference>
<dbReference type="PRINTS" id="PR01809">
    <property type="entry name" value="ANNEXINX"/>
</dbReference>
<dbReference type="SMART" id="SM00335">
    <property type="entry name" value="ANX"/>
    <property type="match status" value="4"/>
</dbReference>
<dbReference type="SUPFAM" id="SSF47874">
    <property type="entry name" value="Annexin"/>
    <property type="match status" value="1"/>
</dbReference>
<dbReference type="PROSITE" id="PS00223">
    <property type="entry name" value="ANNEXIN_1"/>
    <property type="match status" value="1"/>
</dbReference>
<dbReference type="PROSITE" id="PS51897">
    <property type="entry name" value="ANNEXIN_2"/>
    <property type="match status" value="4"/>
</dbReference>